<organism>
    <name type="scientific">Arabidopsis thaliana</name>
    <name type="common">Mouse-ear cress</name>
    <dbReference type="NCBI Taxonomy" id="3702"/>
    <lineage>
        <taxon>Eukaryota</taxon>
        <taxon>Viridiplantae</taxon>
        <taxon>Streptophyta</taxon>
        <taxon>Embryophyta</taxon>
        <taxon>Tracheophyta</taxon>
        <taxon>Spermatophyta</taxon>
        <taxon>Magnoliopsida</taxon>
        <taxon>eudicotyledons</taxon>
        <taxon>Gunneridae</taxon>
        <taxon>Pentapetalae</taxon>
        <taxon>rosids</taxon>
        <taxon>malvids</taxon>
        <taxon>Brassicales</taxon>
        <taxon>Brassicaceae</taxon>
        <taxon>Camelineae</taxon>
        <taxon>Arabidopsis</taxon>
    </lineage>
</organism>
<name>HPP5_ARATH</name>
<comment type="function">
    <text evidence="1">May play a role in abiotic stress response.</text>
</comment>
<comment type="subcellular location">
    <subcellularLocation>
        <location evidence="4">Membrane</location>
        <topology evidence="4">Multi-pass membrane protein</topology>
    </subcellularLocation>
</comment>
<comment type="tissue specificity">
    <text evidence="3">Expressed in roots, leaves, stems and flowers.</text>
</comment>
<comment type="similarity">
    <text evidence="4">Belongs to the ADIPOR family.</text>
</comment>
<feature type="chain" id="PRO_0000430051" description="Heptahelical transmembrane protein 5">
    <location>
        <begin position="1"/>
        <end position="374"/>
    </location>
</feature>
<feature type="topological domain" description="Cytoplasmic" evidence="2">
    <location>
        <begin position="1"/>
        <end position="79"/>
    </location>
</feature>
<feature type="transmembrane region" description="Helical" evidence="2">
    <location>
        <begin position="80"/>
        <end position="100"/>
    </location>
</feature>
<feature type="topological domain" description="Extracellular" evidence="2">
    <location>
        <begin position="101"/>
        <end position="191"/>
    </location>
</feature>
<feature type="transmembrane region" description="Helical" evidence="2">
    <location>
        <begin position="192"/>
        <end position="212"/>
    </location>
</feature>
<feature type="topological domain" description="Cytoplasmic" evidence="2">
    <location>
        <begin position="213"/>
        <end position="228"/>
    </location>
</feature>
<feature type="transmembrane region" description="Helical" evidence="2">
    <location>
        <begin position="229"/>
        <end position="249"/>
    </location>
</feature>
<feature type="topological domain" description="Extracellular" evidence="2">
    <location>
        <begin position="250"/>
        <end position="256"/>
    </location>
</feature>
<feature type="transmembrane region" description="Helical" evidence="2">
    <location>
        <begin position="257"/>
        <end position="277"/>
    </location>
</feature>
<feature type="topological domain" description="Cytoplasmic" evidence="2">
    <location>
        <begin position="278"/>
        <end position="288"/>
    </location>
</feature>
<feature type="transmembrane region" description="Helical" evidence="2">
    <location>
        <begin position="289"/>
        <end position="309"/>
    </location>
</feature>
<feature type="topological domain" description="Extracellular" evidence="2">
    <location>
        <begin position="310"/>
        <end position="313"/>
    </location>
</feature>
<feature type="transmembrane region" description="Helical" evidence="2">
    <location>
        <begin position="314"/>
        <end position="334"/>
    </location>
</feature>
<feature type="topological domain" description="Cytoplasmic" evidence="2">
    <location>
        <begin position="335"/>
        <end position="347"/>
    </location>
</feature>
<feature type="transmembrane region" description="Helical" evidence="2">
    <location>
        <begin position="348"/>
        <end position="368"/>
    </location>
</feature>
<feature type="topological domain" description="Extracellular" evidence="2">
    <location>
        <begin position="369"/>
        <end position="374"/>
    </location>
</feature>
<feature type="sequence conflict" description="In Ref. 4; BAD43945/BAD43963/BAD43999." evidence="4" ref="4">
    <original>S</original>
    <variation>I</variation>
    <location>
        <position position="142"/>
    </location>
</feature>
<evidence type="ECO:0000250" key="1"/>
<evidence type="ECO:0000255" key="2"/>
<evidence type="ECO:0000269" key="3">
    <source>
    </source>
</evidence>
<evidence type="ECO:0000305" key="4"/>
<proteinExistence type="evidence at transcript level"/>
<gene>
    <name type="primary">HHP5</name>
    <name type="ordered locus">At4g38320</name>
    <name type="ORF">F22I13.90</name>
</gene>
<reference key="1">
    <citation type="journal article" date="1999" name="Nature">
        <title>Sequence and analysis of chromosome 4 of the plant Arabidopsis thaliana.</title>
        <authorList>
            <person name="Mayer K.F.X."/>
            <person name="Schueller C."/>
            <person name="Wambutt R."/>
            <person name="Murphy G."/>
            <person name="Volckaert G."/>
            <person name="Pohl T."/>
            <person name="Duesterhoeft A."/>
            <person name="Stiekema W."/>
            <person name="Entian K.-D."/>
            <person name="Terryn N."/>
            <person name="Harris B."/>
            <person name="Ansorge W."/>
            <person name="Brandt P."/>
            <person name="Grivell L.A."/>
            <person name="Rieger M."/>
            <person name="Weichselgartner M."/>
            <person name="de Simone V."/>
            <person name="Obermaier B."/>
            <person name="Mache R."/>
            <person name="Mueller M."/>
            <person name="Kreis M."/>
            <person name="Delseny M."/>
            <person name="Puigdomenech P."/>
            <person name="Watson M."/>
            <person name="Schmidtheini T."/>
            <person name="Reichert B."/>
            <person name="Portetelle D."/>
            <person name="Perez-Alonso M."/>
            <person name="Boutry M."/>
            <person name="Bancroft I."/>
            <person name="Vos P."/>
            <person name="Hoheisel J."/>
            <person name="Zimmermann W."/>
            <person name="Wedler H."/>
            <person name="Ridley P."/>
            <person name="Langham S.-A."/>
            <person name="McCullagh B."/>
            <person name="Bilham L."/>
            <person name="Robben J."/>
            <person name="van der Schueren J."/>
            <person name="Grymonprez B."/>
            <person name="Chuang Y.-J."/>
            <person name="Vandenbussche F."/>
            <person name="Braeken M."/>
            <person name="Weltjens I."/>
            <person name="Voet M."/>
            <person name="Bastiaens I."/>
            <person name="Aert R."/>
            <person name="Defoor E."/>
            <person name="Weitzenegger T."/>
            <person name="Bothe G."/>
            <person name="Ramsperger U."/>
            <person name="Hilbert H."/>
            <person name="Braun M."/>
            <person name="Holzer E."/>
            <person name="Brandt A."/>
            <person name="Peters S."/>
            <person name="van Staveren M."/>
            <person name="Dirkse W."/>
            <person name="Mooijman P."/>
            <person name="Klein Lankhorst R."/>
            <person name="Rose M."/>
            <person name="Hauf J."/>
            <person name="Koetter P."/>
            <person name="Berneiser S."/>
            <person name="Hempel S."/>
            <person name="Feldpausch M."/>
            <person name="Lamberth S."/>
            <person name="Van den Daele H."/>
            <person name="De Keyser A."/>
            <person name="Buysshaert C."/>
            <person name="Gielen J."/>
            <person name="Villarroel R."/>
            <person name="De Clercq R."/>
            <person name="van Montagu M."/>
            <person name="Rogers J."/>
            <person name="Cronin A."/>
            <person name="Quail M.A."/>
            <person name="Bray-Allen S."/>
            <person name="Clark L."/>
            <person name="Doggett J."/>
            <person name="Hall S."/>
            <person name="Kay M."/>
            <person name="Lennard N."/>
            <person name="McLay K."/>
            <person name="Mayes R."/>
            <person name="Pettett A."/>
            <person name="Rajandream M.A."/>
            <person name="Lyne M."/>
            <person name="Benes V."/>
            <person name="Rechmann S."/>
            <person name="Borkova D."/>
            <person name="Bloecker H."/>
            <person name="Scharfe M."/>
            <person name="Grimm M."/>
            <person name="Loehnert T.-H."/>
            <person name="Dose S."/>
            <person name="de Haan M."/>
            <person name="Maarse A.C."/>
            <person name="Schaefer M."/>
            <person name="Mueller-Auer S."/>
            <person name="Gabel C."/>
            <person name="Fuchs M."/>
            <person name="Fartmann B."/>
            <person name="Granderath K."/>
            <person name="Dauner D."/>
            <person name="Herzl A."/>
            <person name="Neumann S."/>
            <person name="Argiriou A."/>
            <person name="Vitale D."/>
            <person name="Liguori R."/>
            <person name="Piravandi E."/>
            <person name="Massenet O."/>
            <person name="Quigley F."/>
            <person name="Clabauld G."/>
            <person name="Muendlein A."/>
            <person name="Felber R."/>
            <person name="Schnabl S."/>
            <person name="Hiller R."/>
            <person name="Schmidt W."/>
            <person name="Lecharny A."/>
            <person name="Aubourg S."/>
            <person name="Chefdor F."/>
            <person name="Cooke R."/>
            <person name="Berger C."/>
            <person name="Monfort A."/>
            <person name="Casacuberta E."/>
            <person name="Gibbons T."/>
            <person name="Weber N."/>
            <person name="Vandenbol M."/>
            <person name="Bargues M."/>
            <person name="Terol J."/>
            <person name="Torres A."/>
            <person name="Perez-Perez A."/>
            <person name="Purnelle B."/>
            <person name="Bent E."/>
            <person name="Johnson S."/>
            <person name="Tacon D."/>
            <person name="Jesse T."/>
            <person name="Heijnen L."/>
            <person name="Schwarz S."/>
            <person name="Scholler P."/>
            <person name="Heber S."/>
            <person name="Francs P."/>
            <person name="Bielke C."/>
            <person name="Frishman D."/>
            <person name="Haase D."/>
            <person name="Lemcke K."/>
            <person name="Mewes H.-W."/>
            <person name="Stocker S."/>
            <person name="Zaccaria P."/>
            <person name="Bevan M."/>
            <person name="Wilson R.K."/>
            <person name="de la Bastide M."/>
            <person name="Habermann K."/>
            <person name="Parnell L."/>
            <person name="Dedhia N."/>
            <person name="Gnoj L."/>
            <person name="Schutz K."/>
            <person name="Huang E."/>
            <person name="Spiegel L."/>
            <person name="Sekhon M."/>
            <person name="Murray J."/>
            <person name="Sheet P."/>
            <person name="Cordes M."/>
            <person name="Abu-Threideh J."/>
            <person name="Stoneking T."/>
            <person name="Kalicki J."/>
            <person name="Graves T."/>
            <person name="Harmon G."/>
            <person name="Edwards J."/>
            <person name="Latreille P."/>
            <person name="Courtney L."/>
            <person name="Cloud J."/>
            <person name="Abbott A."/>
            <person name="Scott K."/>
            <person name="Johnson D."/>
            <person name="Minx P."/>
            <person name="Bentley D."/>
            <person name="Fulton B."/>
            <person name="Miller N."/>
            <person name="Greco T."/>
            <person name="Kemp K."/>
            <person name="Kramer J."/>
            <person name="Fulton L."/>
            <person name="Mardis E."/>
            <person name="Dante M."/>
            <person name="Pepin K."/>
            <person name="Hillier L.W."/>
            <person name="Nelson J."/>
            <person name="Spieth J."/>
            <person name="Ryan E."/>
            <person name="Andrews S."/>
            <person name="Geisel C."/>
            <person name="Layman D."/>
            <person name="Du H."/>
            <person name="Ali J."/>
            <person name="Berghoff A."/>
            <person name="Jones K."/>
            <person name="Drone K."/>
            <person name="Cotton M."/>
            <person name="Joshu C."/>
            <person name="Antonoiu B."/>
            <person name="Zidanic M."/>
            <person name="Strong C."/>
            <person name="Sun H."/>
            <person name="Lamar B."/>
            <person name="Yordan C."/>
            <person name="Ma P."/>
            <person name="Zhong J."/>
            <person name="Preston R."/>
            <person name="Vil D."/>
            <person name="Shekher M."/>
            <person name="Matero A."/>
            <person name="Shah R."/>
            <person name="Swaby I.K."/>
            <person name="O'Shaughnessy A."/>
            <person name="Rodriguez M."/>
            <person name="Hoffman J."/>
            <person name="Till S."/>
            <person name="Granat S."/>
            <person name="Shohdy N."/>
            <person name="Hasegawa A."/>
            <person name="Hameed A."/>
            <person name="Lodhi M."/>
            <person name="Johnson A."/>
            <person name="Chen E."/>
            <person name="Marra M.A."/>
            <person name="Martienssen R."/>
            <person name="McCombie W.R."/>
        </authorList>
    </citation>
    <scope>NUCLEOTIDE SEQUENCE [LARGE SCALE GENOMIC DNA]</scope>
    <source>
        <strain>cv. Columbia</strain>
    </source>
</reference>
<reference key="2">
    <citation type="journal article" date="2017" name="Plant J.">
        <title>Araport11: a complete reannotation of the Arabidopsis thaliana reference genome.</title>
        <authorList>
            <person name="Cheng C.Y."/>
            <person name="Krishnakumar V."/>
            <person name="Chan A.P."/>
            <person name="Thibaud-Nissen F."/>
            <person name="Schobel S."/>
            <person name="Town C.D."/>
        </authorList>
    </citation>
    <scope>GENOME REANNOTATION</scope>
    <source>
        <strain>cv. Columbia</strain>
    </source>
</reference>
<reference key="3">
    <citation type="journal article" date="2003" name="Science">
        <title>Empirical analysis of transcriptional activity in the Arabidopsis genome.</title>
        <authorList>
            <person name="Yamada K."/>
            <person name="Lim J."/>
            <person name="Dale J.M."/>
            <person name="Chen H."/>
            <person name="Shinn P."/>
            <person name="Palm C.J."/>
            <person name="Southwick A.M."/>
            <person name="Wu H.C."/>
            <person name="Kim C.J."/>
            <person name="Nguyen M."/>
            <person name="Pham P.K."/>
            <person name="Cheuk R.F."/>
            <person name="Karlin-Newmann G."/>
            <person name="Liu S.X."/>
            <person name="Lam B."/>
            <person name="Sakano H."/>
            <person name="Wu T."/>
            <person name="Yu G."/>
            <person name="Miranda M."/>
            <person name="Quach H.L."/>
            <person name="Tripp M."/>
            <person name="Chang C.H."/>
            <person name="Lee J.M."/>
            <person name="Toriumi M.J."/>
            <person name="Chan M.M."/>
            <person name="Tang C.C."/>
            <person name="Onodera C.S."/>
            <person name="Deng J.M."/>
            <person name="Akiyama K."/>
            <person name="Ansari Y."/>
            <person name="Arakawa T."/>
            <person name="Banh J."/>
            <person name="Banno F."/>
            <person name="Bowser L."/>
            <person name="Brooks S.Y."/>
            <person name="Carninci P."/>
            <person name="Chao Q."/>
            <person name="Choy N."/>
            <person name="Enju A."/>
            <person name="Goldsmith A.D."/>
            <person name="Gurjal M."/>
            <person name="Hansen N.F."/>
            <person name="Hayashizaki Y."/>
            <person name="Johnson-Hopson C."/>
            <person name="Hsuan V.W."/>
            <person name="Iida K."/>
            <person name="Karnes M."/>
            <person name="Khan S."/>
            <person name="Koesema E."/>
            <person name="Ishida J."/>
            <person name="Jiang P.X."/>
            <person name="Jones T."/>
            <person name="Kawai J."/>
            <person name="Kamiya A."/>
            <person name="Meyers C."/>
            <person name="Nakajima M."/>
            <person name="Narusaka M."/>
            <person name="Seki M."/>
            <person name="Sakurai T."/>
            <person name="Satou M."/>
            <person name="Tamse R."/>
            <person name="Vaysberg M."/>
            <person name="Wallender E.K."/>
            <person name="Wong C."/>
            <person name="Yamamura Y."/>
            <person name="Yuan S."/>
            <person name="Shinozaki K."/>
            <person name="Davis R.W."/>
            <person name="Theologis A."/>
            <person name="Ecker J.R."/>
        </authorList>
    </citation>
    <scope>NUCLEOTIDE SEQUENCE [LARGE SCALE MRNA]</scope>
    <source>
        <strain>cv. Columbia</strain>
    </source>
</reference>
<reference key="4">
    <citation type="submission" date="2004-09" db="EMBL/GenBank/DDBJ databases">
        <title>Large-scale analysis of RIKEN Arabidopsis full-length (RAFL) cDNAs.</title>
        <authorList>
            <person name="Totoki Y."/>
            <person name="Seki M."/>
            <person name="Ishida J."/>
            <person name="Nakajima M."/>
            <person name="Enju A."/>
            <person name="Kamiya A."/>
            <person name="Narusaka M."/>
            <person name="Shin-i T."/>
            <person name="Nakagawa M."/>
            <person name="Sakamoto N."/>
            <person name="Oishi K."/>
            <person name="Kohara Y."/>
            <person name="Kobayashi M."/>
            <person name="Toyoda A."/>
            <person name="Sakaki Y."/>
            <person name="Sakurai T."/>
            <person name="Iida K."/>
            <person name="Akiyama K."/>
            <person name="Satou M."/>
            <person name="Toyoda T."/>
            <person name="Konagaya A."/>
            <person name="Carninci P."/>
            <person name="Kawai J."/>
            <person name="Hayashizaki Y."/>
            <person name="Shinozaki K."/>
        </authorList>
    </citation>
    <scope>NUCLEOTIDE SEQUENCE [LARGE SCALE MRNA]</scope>
    <source>
        <strain>cv. Columbia</strain>
    </source>
</reference>
<reference key="5">
    <citation type="journal article" date="2005" name="J. Exp. Bot.">
        <title>A novel gene family in Arabidopsis encoding putative heptahelical transmembrane proteins homologous to human adiponectin receptors and progestin receptors.</title>
        <authorList>
            <person name="Hsieh M.H."/>
            <person name="Goodman H.M."/>
        </authorList>
    </citation>
    <scope>GENE FAMILY</scope>
    <scope>NOMENCLATURE</scope>
    <scope>TISSUE SPECIFICITY</scope>
</reference>
<sequence length="374" mass="42786">MGDEAEIKEHLKPQASSETIDKKHNVKGKRLWQKVKYQLVEFHSLPAYLRDNEYIIGHYRSEWPIKQILLSIFTIHNETLNVWTHLIGFFLFLALTIYTATKVPSVVDLHSLQHRLPDLLRKTDLHKLHSELMSRLPSSPSSWHVMDLLYNCLPERFSHGNYTDMCVLHSVREDLANLIAPLIFRPITRWPFYAFLGGAIFCLLASSTCHLLSCHSERVSYIMLRLDYAGIAALIATSFYPPVYYSFMCDPFFCNLYLGFITILGIATVLVSLLPVFQSLEFRVVRASLFFGMGFSGLAPILHKLIIFWDQPEALHMTGYEILMGLLYGLGAVVYATRIPERWMPGKFDIAGHSHQLFHVLVVAGALTHYRAGL</sequence>
<accession>Q9SVF3</accession>
<accession>Q67ZB8</accession>
<dbReference type="EMBL" id="AL035539">
    <property type="protein sequence ID" value="CAB37488.1"/>
    <property type="molecule type" value="Genomic_DNA"/>
</dbReference>
<dbReference type="EMBL" id="AL161593">
    <property type="protein sequence ID" value="CAB80497.1"/>
    <property type="molecule type" value="Genomic_DNA"/>
</dbReference>
<dbReference type="EMBL" id="CP002687">
    <property type="protein sequence ID" value="AEE86913.1"/>
    <property type="molecule type" value="Genomic_DNA"/>
</dbReference>
<dbReference type="EMBL" id="AY070414">
    <property type="protein sequence ID" value="AAL49910.1"/>
    <property type="molecule type" value="mRNA"/>
</dbReference>
<dbReference type="EMBL" id="AY096622">
    <property type="protein sequence ID" value="AAM20272.1"/>
    <property type="molecule type" value="mRNA"/>
</dbReference>
<dbReference type="EMBL" id="AK176182">
    <property type="protein sequence ID" value="BAD43945.1"/>
    <property type="molecule type" value="mRNA"/>
</dbReference>
<dbReference type="EMBL" id="AK176200">
    <property type="protein sequence ID" value="BAD43963.1"/>
    <property type="molecule type" value="mRNA"/>
</dbReference>
<dbReference type="EMBL" id="AK176236">
    <property type="protein sequence ID" value="BAD43999.1"/>
    <property type="molecule type" value="mRNA"/>
</dbReference>
<dbReference type="PIR" id="T05660">
    <property type="entry name" value="T05660"/>
</dbReference>
<dbReference type="RefSeq" id="NP_195545.1">
    <property type="nucleotide sequence ID" value="NM_119994.2"/>
</dbReference>
<dbReference type="SMR" id="Q9SVF3"/>
<dbReference type="FunCoup" id="Q9SVF3">
    <property type="interactions" value="2817"/>
</dbReference>
<dbReference type="STRING" id="3702.Q9SVF3"/>
<dbReference type="iPTMnet" id="Q9SVF3"/>
<dbReference type="PaxDb" id="3702-AT4G38320.1"/>
<dbReference type="ProteomicsDB" id="230266"/>
<dbReference type="EnsemblPlants" id="AT4G38320.1">
    <property type="protein sequence ID" value="AT4G38320.1"/>
    <property type="gene ID" value="AT4G38320"/>
</dbReference>
<dbReference type="GeneID" id="829989"/>
<dbReference type="Gramene" id="AT4G38320.1">
    <property type="protein sequence ID" value="AT4G38320.1"/>
    <property type="gene ID" value="AT4G38320"/>
</dbReference>
<dbReference type="KEGG" id="ath:AT4G38320"/>
<dbReference type="Araport" id="AT4G38320"/>
<dbReference type="TAIR" id="AT4G38320">
    <property type="gene designation" value="HHP5"/>
</dbReference>
<dbReference type="eggNOG" id="KOG0748">
    <property type="taxonomic scope" value="Eukaryota"/>
</dbReference>
<dbReference type="HOGENOM" id="CLU_023075_4_1_1"/>
<dbReference type="InParanoid" id="Q9SVF3"/>
<dbReference type="OMA" id="IVYANRF"/>
<dbReference type="PhylomeDB" id="Q9SVF3"/>
<dbReference type="PRO" id="PR:Q9SVF3"/>
<dbReference type="Proteomes" id="UP000006548">
    <property type="component" value="Chromosome 4"/>
</dbReference>
<dbReference type="ExpressionAtlas" id="Q9SVF3">
    <property type="expression patterns" value="baseline and differential"/>
</dbReference>
<dbReference type="GO" id="GO:0016020">
    <property type="term" value="C:membrane"/>
    <property type="evidence" value="ECO:0007669"/>
    <property type="project" value="UniProtKB-SubCell"/>
</dbReference>
<dbReference type="GO" id="GO:0009725">
    <property type="term" value="P:response to hormone"/>
    <property type="evidence" value="ECO:0000270"/>
    <property type="project" value="TAIR"/>
</dbReference>
<dbReference type="GO" id="GO:0009744">
    <property type="term" value="P:response to sucrose"/>
    <property type="evidence" value="ECO:0000270"/>
    <property type="project" value="TAIR"/>
</dbReference>
<dbReference type="InterPro" id="IPR004254">
    <property type="entry name" value="AdipoR/HlyIII-related"/>
</dbReference>
<dbReference type="PANTHER" id="PTHR20855:SF52">
    <property type="entry name" value="ADIPONECTIN RECEPTOR PROTEIN"/>
    <property type="match status" value="1"/>
</dbReference>
<dbReference type="PANTHER" id="PTHR20855">
    <property type="entry name" value="ADIPOR/PROGESTIN RECEPTOR-RELATED"/>
    <property type="match status" value="1"/>
</dbReference>
<dbReference type="Pfam" id="PF03006">
    <property type="entry name" value="HlyIII"/>
    <property type="match status" value="1"/>
</dbReference>
<protein>
    <recommendedName>
        <fullName>Heptahelical transmembrane protein 5</fullName>
    </recommendedName>
    <alternativeName>
        <fullName>PAQR family protein HHP5</fullName>
    </alternativeName>
</protein>
<keyword id="KW-0472">Membrane</keyword>
<keyword id="KW-1185">Reference proteome</keyword>
<keyword id="KW-0346">Stress response</keyword>
<keyword id="KW-0812">Transmembrane</keyword>
<keyword id="KW-1133">Transmembrane helix</keyword>